<organism>
    <name type="scientific">Arctogadus glacialis</name>
    <name type="common">Arctic cod</name>
    <dbReference type="NCBI Taxonomy" id="185735"/>
    <lineage>
        <taxon>Eukaryota</taxon>
        <taxon>Metazoa</taxon>
        <taxon>Chordata</taxon>
        <taxon>Craniata</taxon>
        <taxon>Vertebrata</taxon>
        <taxon>Euteleostomi</taxon>
        <taxon>Actinopterygii</taxon>
        <taxon>Neopterygii</taxon>
        <taxon>Teleostei</taxon>
        <taxon>Neoteleostei</taxon>
        <taxon>Acanthomorphata</taxon>
        <taxon>Zeiogadaria</taxon>
        <taxon>Gadariae</taxon>
        <taxon>Gadiformes</taxon>
        <taxon>Gadoidei</taxon>
        <taxon>Gadidae</taxon>
        <taxon>Arctogadus</taxon>
    </lineage>
</organism>
<protein>
    <recommendedName>
        <fullName>Hemoglobin subunit alpha-1</fullName>
    </recommendedName>
    <alternativeName>
        <fullName>Alpha-1-globin</fullName>
    </alternativeName>
    <alternativeName>
        <fullName>Hemoglobin alpha-1 chain</fullName>
    </alternativeName>
</protein>
<keyword id="KW-0007">Acetylation</keyword>
<keyword id="KW-0903">Direct protein sequencing</keyword>
<keyword id="KW-0349">Heme</keyword>
<keyword id="KW-0408">Iron</keyword>
<keyword id="KW-0479">Metal-binding</keyword>
<keyword id="KW-0561">Oxygen transport</keyword>
<keyword id="KW-0813">Transport</keyword>
<proteinExistence type="evidence at protein level"/>
<accession>Q1AGS5</accession>
<accession>P84602</accession>
<comment type="function">
    <text evidence="2 3">Involved in oxygen transport from gills to the various peripheral tissues.</text>
</comment>
<comment type="subunit">
    <text evidence="2">Hb 1 is a heterotetramer of two alpha-1 and two beta-1 chains.</text>
</comment>
<comment type="tissue specificity">
    <text evidence="3">Red blood cells.</text>
</comment>
<comment type="similarity">
    <text evidence="1">Belongs to the globin family.</text>
</comment>
<dbReference type="EMBL" id="DQ125474">
    <property type="protein sequence ID" value="AAZ99826.1"/>
    <property type="molecule type" value="mRNA"/>
</dbReference>
<dbReference type="SMR" id="Q1AGS5"/>
<dbReference type="iPTMnet" id="Q1AGS5"/>
<dbReference type="GO" id="GO:0072562">
    <property type="term" value="C:blood microparticle"/>
    <property type="evidence" value="ECO:0007669"/>
    <property type="project" value="TreeGrafter"/>
</dbReference>
<dbReference type="GO" id="GO:0031838">
    <property type="term" value="C:haptoglobin-hemoglobin complex"/>
    <property type="evidence" value="ECO:0007669"/>
    <property type="project" value="TreeGrafter"/>
</dbReference>
<dbReference type="GO" id="GO:0005833">
    <property type="term" value="C:hemoglobin complex"/>
    <property type="evidence" value="ECO:0007669"/>
    <property type="project" value="InterPro"/>
</dbReference>
<dbReference type="GO" id="GO:0031720">
    <property type="term" value="F:haptoglobin binding"/>
    <property type="evidence" value="ECO:0007669"/>
    <property type="project" value="TreeGrafter"/>
</dbReference>
<dbReference type="GO" id="GO:0020037">
    <property type="term" value="F:heme binding"/>
    <property type="evidence" value="ECO:0007669"/>
    <property type="project" value="InterPro"/>
</dbReference>
<dbReference type="GO" id="GO:0005506">
    <property type="term" value="F:iron ion binding"/>
    <property type="evidence" value="ECO:0007669"/>
    <property type="project" value="InterPro"/>
</dbReference>
<dbReference type="GO" id="GO:0043177">
    <property type="term" value="F:organic acid binding"/>
    <property type="evidence" value="ECO:0007669"/>
    <property type="project" value="TreeGrafter"/>
</dbReference>
<dbReference type="GO" id="GO:0019825">
    <property type="term" value="F:oxygen binding"/>
    <property type="evidence" value="ECO:0007669"/>
    <property type="project" value="InterPro"/>
</dbReference>
<dbReference type="GO" id="GO:0005344">
    <property type="term" value="F:oxygen carrier activity"/>
    <property type="evidence" value="ECO:0007669"/>
    <property type="project" value="UniProtKB-KW"/>
</dbReference>
<dbReference type="GO" id="GO:0004601">
    <property type="term" value="F:peroxidase activity"/>
    <property type="evidence" value="ECO:0007669"/>
    <property type="project" value="TreeGrafter"/>
</dbReference>
<dbReference type="GO" id="GO:0042744">
    <property type="term" value="P:hydrogen peroxide catabolic process"/>
    <property type="evidence" value="ECO:0007669"/>
    <property type="project" value="TreeGrafter"/>
</dbReference>
<dbReference type="CDD" id="cd08927">
    <property type="entry name" value="Hb-alpha-like"/>
    <property type="match status" value="1"/>
</dbReference>
<dbReference type="FunFam" id="1.10.490.10:FF:000002">
    <property type="entry name" value="Hemoglobin subunit alpha"/>
    <property type="match status" value="1"/>
</dbReference>
<dbReference type="Gene3D" id="1.10.490.10">
    <property type="entry name" value="Globins"/>
    <property type="match status" value="1"/>
</dbReference>
<dbReference type="InterPro" id="IPR000971">
    <property type="entry name" value="Globin"/>
</dbReference>
<dbReference type="InterPro" id="IPR009050">
    <property type="entry name" value="Globin-like_sf"/>
</dbReference>
<dbReference type="InterPro" id="IPR012292">
    <property type="entry name" value="Globin/Proto"/>
</dbReference>
<dbReference type="InterPro" id="IPR002338">
    <property type="entry name" value="Hemoglobin_a-typ"/>
</dbReference>
<dbReference type="InterPro" id="IPR050056">
    <property type="entry name" value="Hemoglobin_oxygen_transport"/>
</dbReference>
<dbReference type="InterPro" id="IPR002339">
    <property type="entry name" value="Hemoglobin_pi"/>
</dbReference>
<dbReference type="PANTHER" id="PTHR11442">
    <property type="entry name" value="HEMOGLOBIN FAMILY MEMBER"/>
    <property type="match status" value="1"/>
</dbReference>
<dbReference type="PANTHER" id="PTHR11442:SF41">
    <property type="entry name" value="HEMOGLOBIN SUBUNIT ZETA"/>
    <property type="match status" value="1"/>
</dbReference>
<dbReference type="Pfam" id="PF00042">
    <property type="entry name" value="Globin"/>
    <property type="match status" value="1"/>
</dbReference>
<dbReference type="PRINTS" id="PR00612">
    <property type="entry name" value="ALPHAHAEM"/>
</dbReference>
<dbReference type="PRINTS" id="PR00815">
    <property type="entry name" value="PIHAEM"/>
</dbReference>
<dbReference type="SUPFAM" id="SSF46458">
    <property type="entry name" value="Globin-like"/>
    <property type="match status" value="1"/>
</dbReference>
<dbReference type="PROSITE" id="PS01033">
    <property type="entry name" value="GLOBIN"/>
    <property type="match status" value="1"/>
</dbReference>
<name>HBA1_ARCGL</name>
<reference evidence="3 4" key="1">
    <citation type="journal article" date="2006" name="J. Biol. Chem.">
        <title>The oxygen transport system in three species of the boreal fish family Gadidae. Molecular phylogeny of hemoglobin.</title>
        <authorList>
            <person name="Verde C."/>
            <person name="Balestrieri M."/>
            <person name="de Pascale D."/>
            <person name="Pagnozzi D."/>
            <person name="Lecointre G."/>
            <person name="di Prisco G."/>
        </authorList>
    </citation>
    <scope>PROTEIN SEQUENCE OF 2-143</scope>
    <scope>NUCLEOTIDE SEQUENCE [MRNA] OF 12-143</scope>
    <scope>FUNCTION</scope>
    <scope>SUBUNIT</scope>
    <scope>ACETYLATION AT SER-2</scope>
    <source>
        <tissue evidence="2">Blood</tissue>
        <tissue evidence="2">Spleen</tissue>
    </source>
</reference>
<evidence type="ECO:0000255" key="1">
    <source>
        <dbReference type="PROSITE-ProRule" id="PRU00238"/>
    </source>
</evidence>
<evidence type="ECO:0000269" key="2">
    <source>
    </source>
</evidence>
<evidence type="ECO:0000305" key="3"/>
<evidence type="ECO:0000312" key="4">
    <source>
        <dbReference type="EMBL" id="AAZ99826.1"/>
    </source>
</evidence>
<feature type="initiator methionine" description="Removed" evidence="2">
    <location>
        <position position="1"/>
    </location>
</feature>
<feature type="chain" id="PRO_0000247575" description="Hemoglobin subunit alpha-1">
    <location>
        <begin position="2"/>
        <end position="143"/>
    </location>
</feature>
<feature type="domain" description="Globin" evidence="1">
    <location>
        <begin position="2"/>
        <end position="143"/>
    </location>
</feature>
<feature type="binding site" evidence="1">
    <location>
        <position position="60"/>
    </location>
    <ligand>
        <name>O2</name>
        <dbReference type="ChEBI" id="CHEBI:15379"/>
    </ligand>
</feature>
<feature type="binding site" description="proximal binding residue" evidence="1">
    <location>
        <position position="89"/>
    </location>
    <ligand>
        <name>heme b</name>
        <dbReference type="ChEBI" id="CHEBI:60344"/>
    </ligand>
    <ligandPart>
        <name>Fe</name>
        <dbReference type="ChEBI" id="CHEBI:18248"/>
    </ligandPart>
</feature>
<feature type="modified residue" description="N-acetylserine" evidence="2">
    <location>
        <position position="2"/>
    </location>
</feature>
<sequence>MSLSSKDKATVKEFFGKMSTRSDDIGAEALSRLVAVYPQTKSYFSHWKDASPGSAPVRKHGITIMGGVYDAVTKIDDLKGGLLSLSELHAFMLRVDPVNFKLLAHCMLVCMSMVFPEEFTPQVHVAVDKFLAQLALALAEKYR</sequence>
<gene>
    <name type="primary">hba1</name>
</gene>